<dbReference type="EC" id="2.4.1.265" evidence="1"/>
<dbReference type="EMBL" id="CU329670">
    <property type="protein sequence ID" value="CAA97353.1"/>
    <property type="molecule type" value="Genomic_DNA"/>
</dbReference>
<dbReference type="PIR" id="T11587">
    <property type="entry name" value="T11587"/>
</dbReference>
<dbReference type="RefSeq" id="NP_594599.1">
    <property type="nucleotide sequence ID" value="NM_001020027.2"/>
</dbReference>
<dbReference type="SMR" id="Q10479"/>
<dbReference type="BioGRID" id="278619">
    <property type="interactions" value="20"/>
</dbReference>
<dbReference type="FunCoup" id="Q10479">
    <property type="interactions" value="456"/>
</dbReference>
<dbReference type="STRING" id="284812.Q10479"/>
<dbReference type="CAZy" id="GT57">
    <property type="family name" value="Glycosyltransferase Family 57"/>
</dbReference>
<dbReference type="PaxDb" id="4896-SPAC17C9.07.1"/>
<dbReference type="EnsemblFungi" id="SPAC17C9.07.1">
    <property type="protein sequence ID" value="SPAC17C9.07.1:pep"/>
    <property type="gene ID" value="SPAC17C9.07"/>
</dbReference>
<dbReference type="GeneID" id="2542143"/>
<dbReference type="KEGG" id="spo:2542143"/>
<dbReference type="PomBase" id="SPAC17C9.07">
    <property type="gene designation" value="alg8"/>
</dbReference>
<dbReference type="VEuPathDB" id="FungiDB:SPAC17C9.07"/>
<dbReference type="eggNOG" id="KOG2576">
    <property type="taxonomic scope" value="Eukaryota"/>
</dbReference>
<dbReference type="HOGENOM" id="CLU_022045_1_1_1"/>
<dbReference type="InParanoid" id="Q10479"/>
<dbReference type="OMA" id="YHSTDFD"/>
<dbReference type="PhylomeDB" id="Q10479"/>
<dbReference type="Reactome" id="R-SPO-446193">
    <property type="pathway name" value="Biosynthesis of the N-glycan precursor (dolichol lipid-linked oligosaccharide, LLO) and transfer to a nascent protein"/>
</dbReference>
<dbReference type="UniPathway" id="UPA00378"/>
<dbReference type="PRO" id="PR:Q10479"/>
<dbReference type="Proteomes" id="UP000002485">
    <property type="component" value="Chromosome I"/>
</dbReference>
<dbReference type="GO" id="GO:0005783">
    <property type="term" value="C:endoplasmic reticulum"/>
    <property type="evidence" value="ECO:0007005"/>
    <property type="project" value="PomBase"/>
</dbReference>
<dbReference type="GO" id="GO:0005789">
    <property type="term" value="C:endoplasmic reticulum membrane"/>
    <property type="evidence" value="ECO:0000250"/>
    <property type="project" value="UniProtKB"/>
</dbReference>
<dbReference type="GO" id="GO:0098553">
    <property type="term" value="C:lumenal side of endoplasmic reticulum membrane"/>
    <property type="evidence" value="ECO:0000304"/>
    <property type="project" value="PomBase"/>
</dbReference>
<dbReference type="GO" id="GO:0042283">
    <property type="term" value="F:dolichyl pyrophosphate Glc1Man9GlcNAc2 alpha-1,3-glucosyltransferase activity"/>
    <property type="evidence" value="ECO:0000250"/>
    <property type="project" value="UniProtKB"/>
</dbReference>
<dbReference type="GO" id="GO:0006488">
    <property type="term" value="P:dolichol-linked oligosaccharide biosynthetic process"/>
    <property type="evidence" value="ECO:0000250"/>
    <property type="project" value="UniProtKB"/>
</dbReference>
<dbReference type="GO" id="GO:0006487">
    <property type="term" value="P:protein N-linked glycosylation"/>
    <property type="evidence" value="ECO:0000250"/>
    <property type="project" value="UniProtKB"/>
</dbReference>
<dbReference type="InterPro" id="IPR004856">
    <property type="entry name" value="Glyco_trans_ALG6/ALG8"/>
</dbReference>
<dbReference type="PANTHER" id="PTHR12413">
    <property type="entry name" value="DOLICHYL GLYCOSYLTRANSFERASE"/>
    <property type="match status" value="1"/>
</dbReference>
<dbReference type="PANTHER" id="PTHR12413:SF2">
    <property type="entry name" value="DOLICHYL PYROPHOSPHATE GLC1MAN9GLCNAC2 ALPHA-1,3-GLUCOSYLTRANSFERASE-RELATED"/>
    <property type="match status" value="1"/>
</dbReference>
<dbReference type="Pfam" id="PF03155">
    <property type="entry name" value="Alg6_Alg8"/>
    <property type="match status" value="1"/>
</dbReference>
<keyword id="KW-0256">Endoplasmic reticulum</keyword>
<keyword id="KW-0328">Glycosyltransferase</keyword>
<keyword id="KW-0472">Membrane</keyword>
<keyword id="KW-1185">Reference proteome</keyword>
<keyword id="KW-0808">Transferase</keyword>
<keyword id="KW-0812">Transmembrane</keyword>
<keyword id="KW-1133">Transmembrane helix</keyword>
<proteinExistence type="inferred from homology"/>
<reference key="1">
    <citation type="journal article" date="2002" name="Nature">
        <title>The genome sequence of Schizosaccharomyces pombe.</title>
        <authorList>
            <person name="Wood V."/>
            <person name="Gwilliam R."/>
            <person name="Rajandream M.A."/>
            <person name="Lyne M.H."/>
            <person name="Lyne R."/>
            <person name="Stewart A."/>
            <person name="Sgouros J.G."/>
            <person name="Peat N."/>
            <person name="Hayles J."/>
            <person name="Baker S.G."/>
            <person name="Basham D."/>
            <person name="Bowman S."/>
            <person name="Brooks K."/>
            <person name="Brown D."/>
            <person name="Brown S."/>
            <person name="Chillingworth T."/>
            <person name="Churcher C.M."/>
            <person name="Collins M."/>
            <person name="Connor R."/>
            <person name="Cronin A."/>
            <person name="Davis P."/>
            <person name="Feltwell T."/>
            <person name="Fraser A."/>
            <person name="Gentles S."/>
            <person name="Goble A."/>
            <person name="Hamlin N."/>
            <person name="Harris D.E."/>
            <person name="Hidalgo J."/>
            <person name="Hodgson G."/>
            <person name="Holroyd S."/>
            <person name="Hornsby T."/>
            <person name="Howarth S."/>
            <person name="Huckle E.J."/>
            <person name="Hunt S."/>
            <person name="Jagels K."/>
            <person name="James K.D."/>
            <person name="Jones L."/>
            <person name="Jones M."/>
            <person name="Leather S."/>
            <person name="McDonald S."/>
            <person name="McLean J."/>
            <person name="Mooney P."/>
            <person name="Moule S."/>
            <person name="Mungall K.L."/>
            <person name="Murphy L.D."/>
            <person name="Niblett D."/>
            <person name="Odell C."/>
            <person name="Oliver K."/>
            <person name="O'Neil S."/>
            <person name="Pearson D."/>
            <person name="Quail M.A."/>
            <person name="Rabbinowitsch E."/>
            <person name="Rutherford K.M."/>
            <person name="Rutter S."/>
            <person name="Saunders D."/>
            <person name="Seeger K."/>
            <person name="Sharp S."/>
            <person name="Skelton J."/>
            <person name="Simmonds M.N."/>
            <person name="Squares R."/>
            <person name="Squares S."/>
            <person name="Stevens K."/>
            <person name="Taylor K."/>
            <person name="Taylor R.G."/>
            <person name="Tivey A."/>
            <person name="Walsh S.V."/>
            <person name="Warren T."/>
            <person name="Whitehead S."/>
            <person name="Woodward J.R."/>
            <person name="Volckaert G."/>
            <person name="Aert R."/>
            <person name="Robben J."/>
            <person name="Grymonprez B."/>
            <person name="Weltjens I."/>
            <person name="Vanstreels E."/>
            <person name="Rieger M."/>
            <person name="Schaefer M."/>
            <person name="Mueller-Auer S."/>
            <person name="Gabel C."/>
            <person name="Fuchs M."/>
            <person name="Duesterhoeft A."/>
            <person name="Fritzc C."/>
            <person name="Holzer E."/>
            <person name="Moestl D."/>
            <person name="Hilbert H."/>
            <person name="Borzym K."/>
            <person name="Langer I."/>
            <person name="Beck A."/>
            <person name="Lehrach H."/>
            <person name="Reinhardt R."/>
            <person name="Pohl T.M."/>
            <person name="Eger P."/>
            <person name="Zimmermann W."/>
            <person name="Wedler H."/>
            <person name="Wambutt R."/>
            <person name="Purnelle B."/>
            <person name="Goffeau A."/>
            <person name="Cadieu E."/>
            <person name="Dreano S."/>
            <person name="Gloux S."/>
            <person name="Lelaure V."/>
            <person name="Mottier S."/>
            <person name="Galibert F."/>
            <person name="Aves S.J."/>
            <person name="Xiang Z."/>
            <person name="Hunt C."/>
            <person name="Moore K."/>
            <person name="Hurst S.M."/>
            <person name="Lucas M."/>
            <person name="Rochet M."/>
            <person name="Gaillardin C."/>
            <person name="Tallada V.A."/>
            <person name="Garzon A."/>
            <person name="Thode G."/>
            <person name="Daga R.R."/>
            <person name="Cruzado L."/>
            <person name="Jimenez J."/>
            <person name="Sanchez M."/>
            <person name="del Rey F."/>
            <person name="Benito J."/>
            <person name="Dominguez A."/>
            <person name="Revuelta J.L."/>
            <person name="Moreno S."/>
            <person name="Armstrong J."/>
            <person name="Forsburg S.L."/>
            <person name="Cerutti L."/>
            <person name="Lowe T."/>
            <person name="McCombie W.R."/>
            <person name="Paulsen I."/>
            <person name="Potashkin J."/>
            <person name="Shpakovski G.V."/>
            <person name="Ussery D."/>
            <person name="Barrell B.G."/>
            <person name="Nurse P."/>
        </authorList>
    </citation>
    <scope>NUCLEOTIDE SEQUENCE [LARGE SCALE GENOMIC DNA]</scope>
    <source>
        <strain>972 / ATCC 24843</strain>
    </source>
</reference>
<reference key="2">
    <citation type="journal article" date="2006" name="Nat. Biotechnol.">
        <title>ORFeome cloning and global analysis of protein localization in the fission yeast Schizosaccharomyces pombe.</title>
        <authorList>
            <person name="Matsuyama A."/>
            <person name="Arai R."/>
            <person name="Yashiroda Y."/>
            <person name="Shirai A."/>
            <person name="Kamata A."/>
            <person name="Sekido S."/>
            <person name="Kobayashi Y."/>
            <person name="Hashimoto A."/>
            <person name="Hamamoto M."/>
            <person name="Hiraoka Y."/>
            <person name="Horinouchi S."/>
            <person name="Yoshida M."/>
        </authorList>
    </citation>
    <scope>SUBCELLULAR LOCATION [LARGE SCALE ANALYSIS]</scope>
</reference>
<name>ALG8_SCHPO</name>
<comment type="function">
    <text evidence="1">Dolichyl pyrophosphate Glc1Man9GlcNAc2 alpha-1,3-glucosyltransferase that operates in the biosynthetic pathway of dolichol-linked oligosaccharides, the glycan precursors employed in protein asparagine (N)-glycosylation. The assembly of dolichol-linked oligosaccharides begins on the cytosolic side of the endoplasmic reticulum membrane and finishes in its lumen. The sequential addition of sugars to dolichol pyrophosphate produces dolichol-linked oligosaccharides containing fourteen sugars, including two GlcNAcs, nine mannoses and three glucoses. Once assembled, the oligosaccharide is transferred from the lipid to nascent proteins by oligosaccharyltransferases. In the lumen of the endoplasmic reticulum, adds the second glucose residue from dolichyl phosphate glucose (Dol-P-Glc) onto the lipid-linked oligosaccharide intermediate Glc(1)Man(9)GlcNAc(2)-PP-Dol to produce Glc(2)Man(9)GlcNAc(2)-PP-Dol.</text>
</comment>
<comment type="catalytic activity">
    <reaction evidence="1">
        <text>an alpha-D-Glc-(1-&gt;3)-alpha-D-Man-(1-&gt;2)-alpha-D-Man-(1-&gt;2)-alpha-D-Man-(1-&gt;3)-[alpha-D-Man-(1-&gt;2)-alpha-D-Man-(1-&gt;3)-[alpha-D-Man-(1-&gt;2)-alpha-D-Man-(1-&gt;6)]-alpha-D-Man-(1-&gt;6)]-beta-D-Man-(1-&gt;4)-beta-D-GlcNAc-(1-&gt;4)-alpha-D-GlcNAc-diphospho-di-trans,poly-cis-dolichol + a di-trans,poly-cis-dolichyl beta-D-glucosyl phosphate = an alpha-D-Glc-(1-&gt;3)-alpha-D-Glc-(1-&gt;3)-alpha-D-Man-(1-&gt;2)-alpha-D-Man-(1-&gt;2)-alpha-D-Man-(1-&gt;3)-[alpha-D-Man-(1-&gt;2)-alpha-D-Man-(1-&gt;3)-[alpha-D-Man-(1-&gt;2)-alpha-D-Man-(1-&gt;6)]-alpha-D-Man-(1-&gt;6)]-beta-D-Man-(1-&gt;4)-beta-D-GlcNAc-(1-&gt;4)-alpha-D-GlcNAc-diphospho-di-trans,poly-cis-dolichol + a di-trans,poly-cis-dolichyl phosphate + H(+)</text>
        <dbReference type="Rhea" id="RHEA:31307"/>
        <dbReference type="Rhea" id="RHEA-COMP:19498"/>
        <dbReference type="Rhea" id="RHEA-COMP:19502"/>
        <dbReference type="Rhea" id="RHEA-COMP:19521"/>
        <dbReference type="Rhea" id="RHEA-COMP:19522"/>
        <dbReference type="ChEBI" id="CHEBI:15378"/>
        <dbReference type="ChEBI" id="CHEBI:57525"/>
        <dbReference type="ChEBI" id="CHEBI:57683"/>
        <dbReference type="ChEBI" id="CHEBI:132521"/>
        <dbReference type="ChEBI" id="CHEBI:132522"/>
        <dbReference type="EC" id="2.4.1.265"/>
    </reaction>
    <physiologicalReaction direction="left-to-right" evidence="1">
        <dbReference type="Rhea" id="RHEA:31308"/>
    </physiologicalReaction>
</comment>
<comment type="pathway">
    <text evidence="1">Protein modification; protein glycosylation.</text>
</comment>
<comment type="subcellular location">
    <subcellularLocation>
        <location evidence="3">Endoplasmic reticulum membrane</location>
        <topology evidence="2">Multi-pass membrane protein</topology>
    </subcellularLocation>
</comment>
<comment type="similarity">
    <text evidence="4">Belongs to the ALG6/ALG8 glucosyltransferase family.</text>
</comment>
<accession>Q10479</accession>
<gene>
    <name type="primary">alg8</name>
    <name type="ORF">SPAC17C9.07</name>
</gene>
<evidence type="ECO:0000250" key="1">
    <source>
        <dbReference type="UniProtKB" id="P40351"/>
    </source>
</evidence>
<evidence type="ECO:0000255" key="2"/>
<evidence type="ECO:0000269" key="3">
    <source>
    </source>
</evidence>
<evidence type="ECO:0000305" key="4"/>
<organism>
    <name type="scientific">Schizosaccharomyces pombe (strain 972 / ATCC 24843)</name>
    <name type="common">Fission yeast</name>
    <dbReference type="NCBI Taxonomy" id="284812"/>
    <lineage>
        <taxon>Eukaryota</taxon>
        <taxon>Fungi</taxon>
        <taxon>Dikarya</taxon>
        <taxon>Ascomycota</taxon>
        <taxon>Taphrinomycotina</taxon>
        <taxon>Schizosaccharomycetes</taxon>
        <taxon>Schizosaccharomycetales</taxon>
        <taxon>Schizosaccharomycetaceae</taxon>
        <taxon>Schizosaccharomyces</taxon>
    </lineage>
</organism>
<sequence length="501" mass="57606">MGKLSMLYNAAIASTFVKVFLFPSYRSTDFEVHRNWLAITHSLPISEWYKSSISEWTLDYPPFFAYMECVLSWIAYFFGFDKAMLDPYNLNYVSPSTVVFQRGSVIVLELVLLFALREYVLSSNVKDQRNALLTAIDIFLSPGLLIIDHIHFQYNGFLFGLLLWSIVLAKPEKNMLLSAAIFSALICFKHIFLYVAPAYFVYLLRVYCFTPNFRPQFLNILKLGSTVISIFLLAFGPWIYMKQIPQLLSRLFPFSRGLCHAYWAPNFWALYSFVDRVAFAVLPRFGYALNQGTSINAPTRGLVGESSFAVLPNIPPALTFYICLGLQITVLIKLFIKPTWRVFVGAVTLCGWISFLFGWHVHEKAILMVILPFSILSLIDRRYLEAFRPLAVSGYLSLLPLLFTLNEAPIKYLFTGAWIAMLLTFDKCAPVPVKRVFLLNRVNIAYISGFVPLFIYNCFIHKLVMGDKFEFLPLMLLSTYAAWGIFWSFVSLLWLYFTDLK</sequence>
<protein>
    <recommendedName>
        <fullName evidence="1">Dolichyl pyrophosphate Glc1Man9GlcNAc2 alpha-1,3-glucosyltransferase</fullName>
        <ecNumber evidence="1">2.4.1.265</ecNumber>
    </recommendedName>
    <alternativeName>
        <fullName>Asparagine-linked glycosylation protein 8</fullName>
    </alternativeName>
    <alternativeName>
        <fullName>Dol-P-Glc:Glc(1)Man(9)GlcNAc(2)-PP-dolichyl alpha-1,3-glucosyltransferase</fullName>
    </alternativeName>
    <alternativeName>
        <fullName>Dolichyl-P-Glc:Glc1Man9GlcNAc2-PP-dolichyl glucosyltransferase</fullName>
    </alternativeName>
</protein>
<feature type="chain" id="PRO_0000174167" description="Dolichyl pyrophosphate Glc1Man9GlcNAc2 alpha-1,3-glucosyltransferase">
    <location>
        <begin position="1"/>
        <end position="501"/>
    </location>
</feature>
<feature type="topological domain" description="Lumenal" evidence="2">
    <location>
        <begin position="1"/>
        <end position="3"/>
    </location>
</feature>
<feature type="transmembrane region" description="Helical" evidence="2">
    <location>
        <begin position="4"/>
        <end position="24"/>
    </location>
</feature>
<feature type="topological domain" description="Cytoplasmic" evidence="2">
    <location>
        <begin position="25"/>
        <end position="59"/>
    </location>
</feature>
<feature type="transmembrane region" description="Helical" evidence="2">
    <location>
        <begin position="60"/>
        <end position="80"/>
    </location>
</feature>
<feature type="topological domain" description="Lumenal" evidence="2">
    <location>
        <begin position="81"/>
        <end position="95"/>
    </location>
</feature>
<feature type="transmembrane region" description="Helical" evidence="2">
    <location>
        <begin position="96"/>
        <end position="116"/>
    </location>
</feature>
<feature type="topological domain" description="Cytoplasmic" evidence="2">
    <location>
        <begin position="117"/>
        <end position="131"/>
    </location>
</feature>
<feature type="transmembrane region" description="Helical" evidence="2">
    <location>
        <begin position="132"/>
        <end position="152"/>
    </location>
</feature>
<feature type="topological domain" description="Lumenal" evidence="2">
    <location>
        <begin position="153"/>
        <end position="156"/>
    </location>
</feature>
<feature type="transmembrane region" description="Helical" evidence="2">
    <location>
        <begin position="157"/>
        <end position="177"/>
    </location>
</feature>
<feature type="topological domain" description="Cytoplasmic" evidence="2">
    <location>
        <begin position="178"/>
        <end position="180"/>
    </location>
</feature>
<feature type="transmembrane region" description="Helical" evidence="2">
    <location>
        <begin position="181"/>
        <end position="201"/>
    </location>
</feature>
<feature type="topological domain" description="Lumenal" evidence="2">
    <location>
        <begin position="202"/>
        <end position="315"/>
    </location>
</feature>
<feature type="transmembrane region" description="Helical" evidence="2">
    <location>
        <begin position="316"/>
        <end position="336"/>
    </location>
</feature>
<feature type="topological domain" description="Cytoplasmic" evidence="2">
    <location>
        <begin position="337"/>
        <end position="341"/>
    </location>
</feature>
<feature type="transmembrane region" description="Helical" evidence="2">
    <location>
        <begin position="342"/>
        <end position="362"/>
    </location>
</feature>
<feature type="topological domain" description="Lumenal" evidence="2">
    <location>
        <begin position="363"/>
        <end position="389"/>
    </location>
</feature>
<feature type="transmembrane region" description="Helical" evidence="2">
    <location>
        <begin position="390"/>
        <end position="410"/>
    </location>
</feature>
<feature type="topological domain" description="Cytoplasmic" evidence="2">
    <location>
        <begin position="411"/>
        <end position="412"/>
    </location>
</feature>
<feature type="transmembrane region" description="Helical" evidence="2">
    <location>
        <begin position="413"/>
        <end position="433"/>
    </location>
</feature>
<feature type="topological domain" description="Lumenal" evidence="2">
    <location>
        <begin position="434"/>
        <end position="443"/>
    </location>
</feature>
<feature type="transmembrane region" description="Helical" evidence="2">
    <location>
        <begin position="444"/>
        <end position="464"/>
    </location>
</feature>
<feature type="topological domain" description="Cytoplasmic" evidence="2">
    <location>
        <begin position="465"/>
        <end position="473"/>
    </location>
</feature>
<feature type="transmembrane region" description="Helical" evidence="2">
    <location>
        <begin position="474"/>
        <end position="494"/>
    </location>
</feature>
<feature type="topological domain" description="Lumenal" evidence="2">
    <location>
        <begin position="495"/>
        <end position="501"/>
    </location>
</feature>